<comment type="function">
    <text evidence="1">Involved in the regulation of the intracellular balance of NAD and NADP, and is a key enzyme in the biosynthesis of NADP. Catalyzes specifically the phosphorylation on 2'-hydroxyl of the adenosine moiety of NAD to yield NADP.</text>
</comment>
<comment type="catalytic activity">
    <reaction evidence="1">
        <text>NAD(+) + ATP = ADP + NADP(+) + H(+)</text>
        <dbReference type="Rhea" id="RHEA:18629"/>
        <dbReference type="ChEBI" id="CHEBI:15378"/>
        <dbReference type="ChEBI" id="CHEBI:30616"/>
        <dbReference type="ChEBI" id="CHEBI:57540"/>
        <dbReference type="ChEBI" id="CHEBI:58349"/>
        <dbReference type="ChEBI" id="CHEBI:456216"/>
        <dbReference type="EC" id="2.7.1.23"/>
    </reaction>
</comment>
<comment type="cofactor">
    <cofactor evidence="1">
        <name>a divalent metal cation</name>
        <dbReference type="ChEBI" id="CHEBI:60240"/>
    </cofactor>
</comment>
<comment type="subcellular location">
    <subcellularLocation>
        <location evidence="1">Cytoplasm</location>
    </subcellularLocation>
</comment>
<comment type="similarity">
    <text evidence="1">Belongs to the NAD kinase family.</text>
</comment>
<accession>A5ILH3</accession>
<keyword id="KW-0067">ATP-binding</keyword>
<keyword id="KW-0963">Cytoplasm</keyword>
<keyword id="KW-0418">Kinase</keyword>
<keyword id="KW-0520">NAD</keyword>
<keyword id="KW-0521">NADP</keyword>
<keyword id="KW-0547">Nucleotide-binding</keyword>
<keyword id="KW-0808">Transferase</keyword>
<sequence>MKIAILYREEREKEGKFLKEKISKEHEVIEFGEANAPGRVTADLIVVVGGDGTVLKAAKKAADGTPMVGFKAGRLGFLTSYTLDEIDRFLEDLRNWNFREETRWFIQIESELGNHLALNDVTLERDLSGKMVEIEVEVEHHSSMWFFADGVVISTPTGSTAYSLSIGGPIIFPECEVLEISPIAPQFFLTRSVVIPSNFKVVVESQRDINMLVDGVLTGKTKRIEVKKSRRYVRILRPPEYDYVTVIRDKLGYGRRIE</sequence>
<name>NADK_THEP1</name>
<gene>
    <name evidence="1" type="primary">nadK</name>
    <name type="ordered locus">Tpet_1028</name>
</gene>
<organism>
    <name type="scientific">Thermotoga petrophila (strain ATCC BAA-488 / DSM 13995 / JCM 10881 / RKU-1)</name>
    <dbReference type="NCBI Taxonomy" id="390874"/>
    <lineage>
        <taxon>Bacteria</taxon>
        <taxon>Thermotogati</taxon>
        <taxon>Thermotogota</taxon>
        <taxon>Thermotogae</taxon>
        <taxon>Thermotogales</taxon>
        <taxon>Thermotogaceae</taxon>
        <taxon>Thermotoga</taxon>
    </lineage>
</organism>
<feature type="chain" id="PRO_1000005453" description="NAD kinase">
    <location>
        <begin position="1"/>
        <end position="258"/>
    </location>
</feature>
<feature type="active site" description="Proton acceptor" evidence="1">
    <location>
        <position position="51"/>
    </location>
</feature>
<feature type="binding site" evidence="1">
    <location>
        <begin position="51"/>
        <end position="52"/>
    </location>
    <ligand>
        <name>NAD(+)</name>
        <dbReference type="ChEBI" id="CHEBI:57540"/>
    </ligand>
</feature>
<feature type="binding site" evidence="1">
    <location>
        <position position="56"/>
    </location>
    <ligand>
        <name>NAD(+)</name>
        <dbReference type="ChEBI" id="CHEBI:57540"/>
    </ligand>
</feature>
<feature type="binding site" evidence="1">
    <location>
        <begin position="119"/>
        <end position="120"/>
    </location>
    <ligand>
        <name>NAD(+)</name>
        <dbReference type="ChEBI" id="CHEBI:57540"/>
    </ligand>
</feature>
<feature type="binding site" evidence="1">
    <location>
        <position position="130"/>
    </location>
    <ligand>
        <name>NAD(+)</name>
        <dbReference type="ChEBI" id="CHEBI:57540"/>
    </ligand>
</feature>
<feature type="binding site" evidence="1">
    <location>
        <position position="149"/>
    </location>
    <ligand>
        <name>NAD(+)</name>
        <dbReference type="ChEBI" id="CHEBI:57540"/>
    </ligand>
</feature>
<feature type="binding site" evidence="1">
    <location>
        <begin position="160"/>
        <end position="165"/>
    </location>
    <ligand>
        <name>NAD(+)</name>
        <dbReference type="ChEBI" id="CHEBI:57540"/>
    </ligand>
</feature>
<feature type="binding site" evidence="1">
    <location>
        <position position="184"/>
    </location>
    <ligand>
        <name>NAD(+)</name>
        <dbReference type="ChEBI" id="CHEBI:57540"/>
    </ligand>
</feature>
<evidence type="ECO:0000255" key="1">
    <source>
        <dbReference type="HAMAP-Rule" id="MF_00361"/>
    </source>
</evidence>
<proteinExistence type="inferred from homology"/>
<dbReference type="EC" id="2.7.1.23" evidence="1"/>
<dbReference type="EMBL" id="CP000702">
    <property type="protein sequence ID" value="ABQ47046.1"/>
    <property type="molecule type" value="Genomic_DNA"/>
</dbReference>
<dbReference type="RefSeq" id="WP_011943580.1">
    <property type="nucleotide sequence ID" value="NC_009486.1"/>
</dbReference>
<dbReference type="SMR" id="A5ILH3"/>
<dbReference type="STRING" id="390874.Tpet_1028"/>
<dbReference type="KEGG" id="tpt:Tpet_1028"/>
<dbReference type="eggNOG" id="COG0061">
    <property type="taxonomic scope" value="Bacteria"/>
</dbReference>
<dbReference type="HOGENOM" id="CLU_008831_0_3_0"/>
<dbReference type="Proteomes" id="UP000006558">
    <property type="component" value="Chromosome"/>
</dbReference>
<dbReference type="GO" id="GO:0005737">
    <property type="term" value="C:cytoplasm"/>
    <property type="evidence" value="ECO:0007669"/>
    <property type="project" value="UniProtKB-SubCell"/>
</dbReference>
<dbReference type="GO" id="GO:0005524">
    <property type="term" value="F:ATP binding"/>
    <property type="evidence" value="ECO:0007669"/>
    <property type="project" value="UniProtKB-KW"/>
</dbReference>
<dbReference type="GO" id="GO:0046872">
    <property type="term" value="F:metal ion binding"/>
    <property type="evidence" value="ECO:0007669"/>
    <property type="project" value="UniProtKB-UniRule"/>
</dbReference>
<dbReference type="GO" id="GO:0051287">
    <property type="term" value="F:NAD binding"/>
    <property type="evidence" value="ECO:0007669"/>
    <property type="project" value="UniProtKB-ARBA"/>
</dbReference>
<dbReference type="GO" id="GO:0003951">
    <property type="term" value="F:NAD+ kinase activity"/>
    <property type="evidence" value="ECO:0007669"/>
    <property type="project" value="UniProtKB-UniRule"/>
</dbReference>
<dbReference type="GO" id="GO:0019674">
    <property type="term" value="P:NAD metabolic process"/>
    <property type="evidence" value="ECO:0007669"/>
    <property type="project" value="InterPro"/>
</dbReference>
<dbReference type="GO" id="GO:0006741">
    <property type="term" value="P:NADP biosynthetic process"/>
    <property type="evidence" value="ECO:0007669"/>
    <property type="project" value="UniProtKB-UniRule"/>
</dbReference>
<dbReference type="Gene3D" id="3.40.50.10330">
    <property type="entry name" value="Probable inorganic polyphosphate/atp-NAD kinase, domain 1"/>
    <property type="match status" value="1"/>
</dbReference>
<dbReference type="Gene3D" id="2.60.200.30">
    <property type="entry name" value="Probable inorganic polyphosphate/atp-NAD kinase, domain 2"/>
    <property type="match status" value="1"/>
</dbReference>
<dbReference type="HAMAP" id="MF_00361">
    <property type="entry name" value="NAD_kinase"/>
    <property type="match status" value="1"/>
</dbReference>
<dbReference type="InterPro" id="IPR017438">
    <property type="entry name" value="ATP-NAD_kinase_N"/>
</dbReference>
<dbReference type="InterPro" id="IPR017437">
    <property type="entry name" value="ATP-NAD_kinase_PpnK-typ_C"/>
</dbReference>
<dbReference type="InterPro" id="IPR016064">
    <property type="entry name" value="NAD/diacylglycerol_kinase_sf"/>
</dbReference>
<dbReference type="InterPro" id="IPR002504">
    <property type="entry name" value="NADK"/>
</dbReference>
<dbReference type="NCBIfam" id="NF010677">
    <property type="entry name" value="PRK14075.1"/>
    <property type="match status" value="1"/>
</dbReference>
<dbReference type="PANTHER" id="PTHR20275">
    <property type="entry name" value="NAD KINASE"/>
    <property type="match status" value="1"/>
</dbReference>
<dbReference type="PANTHER" id="PTHR20275:SF0">
    <property type="entry name" value="NAD KINASE"/>
    <property type="match status" value="1"/>
</dbReference>
<dbReference type="Pfam" id="PF01513">
    <property type="entry name" value="NAD_kinase"/>
    <property type="match status" value="1"/>
</dbReference>
<dbReference type="Pfam" id="PF20143">
    <property type="entry name" value="NAD_kinase_C"/>
    <property type="match status" value="1"/>
</dbReference>
<dbReference type="SUPFAM" id="SSF111331">
    <property type="entry name" value="NAD kinase/diacylglycerol kinase-like"/>
    <property type="match status" value="1"/>
</dbReference>
<reference key="1">
    <citation type="submission" date="2007-05" db="EMBL/GenBank/DDBJ databases">
        <title>Complete sequence of Thermotoga petrophila RKU-1.</title>
        <authorList>
            <consortium name="US DOE Joint Genome Institute"/>
            <person name="Copeland A."/>
            <person name="Lucas S."/>
            <person name="Lapidus A."/>
            <person name="Barry K."/>
            <person name="Glavina del Rio T."/>
            <person name="Dalin E."/>
            <person name="Tice H."/>
            <person name="Pitluck S."/>
            <person name="Sims D."/>
            <person name="Brettin T."/>
            <person name="Bruce D."/>
            <person name="Detter J.C."/>
            <person name="Han C."/>
            <person name="Tapia R."/>
            <person name="Schmutz J."/>
            <person name="Larimer F."/>
            <person name="Land M."/>
            <person name="Hauser L."/>
            <person name="Kyrpides N."/>
            <person name="Mikhailova N."/>
            <person name="Nelson K."/>
            <person name="Gogarten J.P."/>
            <person name="Noll K."/>
            <person name="Richardson P."/>
        </authorList>
    </citation>
    <scope>NUCLEOTIDE SEQUENCE [LARGE SCALE GENOMIC DNA]</scope>
    <source>
        <strain>ATCC BAA-488 / DSM 13995 / JCM 10881 / RKU-1</strain>
    </source>
</reference>
<protein>
    <recommendedName>
        <fullName evidence="1">NAD kinase</fullName>
        <ecNumber evidence="1">2.7.1.23</ecNumber>
    </recommendedName>
    <alternativeName>
        <fullName evidence="1">ATP-dependent NAD kinase</fullName>
    </alternativeName>
</protein>